<protein>
    <recommendedName>
        <fullName evidence="1">Proteasome subunit beta 2</fullName>
        <ecNumber evidence="1">3.4.25.1</ecNumber>
    </recommendedName>
    <alternativeName>
        <fullName evidence="1">20S proteasome beta subunit 2</fullName>
    </alternativeName>
    <alternativeName>
        <fullName evidence="1">Proteasome core protein PsmB 2</fullName>
    </alternativeName>
</protein>
<dbReference type="EC" id="3.4.25.1" evidence="1"/>
<dbReference type="EMBL" id="CP001860">
    <property type="protein sequence ID" value="ADB61152.1"/>
    <property type="molecule type" value="Genomic_DNA"/>
</dbReference>
<dbReference type="RefSeq" id="WP_012943436.1">
    <property type="nucleotide sequence ID" value="NC_013743.1"/>
</dbReference>
<dbReference type="SMR" id="D2RUI0"/>
<dbReference type="STRING" id="543526.Htur_2272"/>
<dbReference type="MEROPS" id="T01.002"/>
<dbReference type="GeneID" id="8742877"/>
<dbReference type="KEGG" id="htu:Htur_2272"/>
<dbReference type="eggNOG" id="arCOG00970">
    <property type="taxonomic scope" value="Archaea"/>
</dbReference>
<dbReference type="HOGENOM" id="CLU_035750_7_2_2"/>
<dbReference type="OrthoDB" id="6330at2157"/>
<dbReference type="Proteomes" id="UP000001903">
    <property type="component" value="Chromosome"/>
</dbReference>
<dbReference type="GO" id="GO:0005737">
    <property type="term" value="C:cytoplasm"/>
    <property type="evidence" value="ECO:0007669"/>
    <property type="project" value="UniProtKB-SubCell"/>
</dbReference>
<dbReference type="GO" id="GO:0019774">
    <property type="term" value="C:proteasome core complex, beta-subunit complex"/>
    <property type="evidence" value="ECO:0007669"/>
    <property type="project" value="UniProtKB-UniRule"/>
</dbReference>
<dbReference type="GO" id="GO:0004298">
    <property type="term" value="F:threonine-type endopeptidase activity"/>
    <property type="evidence" value="ECO:0007669"/>
    <property type="project" value="UniProtKB-UniRule"/>
</dbReference>
<dbReference type="GO" id="GO:0010498">
    <property type="term" value="P:proteasomal protein catabolic process"/>
    <property type="evidence" value="ECO:0007669"/>
    <property type="project" value="UniProtKB-UniRule"/>
</dbReference>
<dbReference type="Gene3D" id="3.60.20.10">
    <property type="entry name" value="Glutamine Phosphoribosylpyrophosphate, subunit 1, domain 1"/>
    <property type="match status" value="1"/>
</dbReference>
<dbReference type="HAMAP" id="MF_02113_A">
    <property type="entry name" value="Proteasome_B_A"/>
    <property type="match status" value="1"/>
</dbReference>
<dbReference type="InterPro" id="IPR029055">
    <property type="entry name" value="Ntn_hydrolases_N"/>
</dbReference>
<dbReference type="InterPro" id="IPR019983">
    <property type="entry name" value="Pept_T1A_Psome_bsu_arc"/>
</dbReference>
<dbReference type="InterPro" id="IPR000243">
    <property type="entry name" value="Pept_T1A_subB"/>
</dbReference>
<dbReference type="InterPro" id="IPR001353">
    <property type="entry name" value="Proteasome_sua/b"/>
</dbReference>
<dbReference type="InterPro" id="IPR023333">
    <property type="entry name" value="Proteasome_suB-type"/>
</dbReference>
<dbReference type="NCBIfam" id="TIGR03634">
    <property type="entry name" value="arc_protsome_B"/>
    <property type="match status" value="1"/>
</dbReference>
<dbReference type="PANTHER" id="PTHR32194:SF0">
    <property type="entry name" value="ATP-DEPENDENT PROTEASE SUBUNIT HSLV"/>
    <property type="match status" value="1"/>
</dbReference>
<dbReference type="PANTHER" id="PTHR32194">
    <property type="entry name" value="METALLOPROTEASE TLDD"/>
    <property type="match status" value="1"/>
</dbReference>
<dbReference type="Pfam" id="PF00227">
    <property type="entry name" value="Proteasome"/>
    <property type="match status" value="1"/>
</dbReference>
<dbReference type="PRINTS" id="PR00141">
    <property type="entry name" value="PROTEASOME"/>
</dbReference>
<dbReference type="SUPFAM" id="SSF56235">
    <property type="entry name" value="N-terminal nucleophile aminohydrolases (Ntn hydrolases)"/>
    <property type="match status" value="1"/>
</dbReference>
<dbReference type="PROSITE" id="PS51476">
    <property type="entry name" value="PROTEASOME_BETA_2"/>
    <property type="match status" value="1"/>
</dbReference>
<evidence type="ECO:0000255" key="1">
    <source>
        <dbReference type="HAMAP-Rule" id="MF_02113"/>
    </source>
</evidence>
<evidence type="ECO:0000256" key="2">
    <source>
        <dbReference type="SAM" id="MobiDB-lite"/>
    </source>
</evidence>
<proteinExistence type="inferred from homology"/>
<organism>
    <name type="scientific">Haloterrigena turkmenica (strain ATCC 51198 / DSM 5511 / JCM 9101 / NCIMB 13204 / VKM B-1734 / 4k)</name>
    <name type="common">Halococcus turkmenicus</name>
    <dbReference type="NCBI Taxonomy" id="543526"/>
    <lineage>
        <taxon>Archaea</taxon>
        <taxon>Methanobacteriati</taxon>
        <taxon>Methanobacteriota</taxon>
        <taxon>Stenosarchaea group</taxon>
        <taxon>Halobacteria</taxon>
        <taxon>Halobacteriales</taxon>
        <taxon>Natrialbaceae</taxon>
        <taxon>Haloterrigena</taxon>
    </lineage>
</organism>
<keyword id="KW-0068">Autocatalytic cleavage</keyword>
<keyword id="KW-0963">Cytoplasm</keyword>
<keyword id="KW-0378">Hydrolase</keyword>
<keyword id="KW-0645">Protease</keyword>
<keyword id="KW-0647">Proteasome</keyword>
<keyword id="KW-0888">Threonine protease</keyword>
<keyword id="KW-0865">Zymogen</keyword>
<reference key="1">
    <citation type="journal article" date="2010" name="Stand. Genomic Sci.">
        <title>Complete genome sequence of Haloterrigena turkmenica type strain (4k).</title>
        <authorList>
            <person name="Saunders E."/>
            <person name="Tindall B.J."/>
            <person name="Fahnrich R."/>
            <person name="Lapidus A."/>
            <person name="Copeland A."/>
            <person name="Del Rio T.G."/>
            <person name="Lucas S."/>
            <person name="Chen F."/>
            <person name="Tice H."/>
            <person name="Cheng J.F."/>
            <person name="Han C."/>
            <person name="Detter J.C."/>
            <person name="Bruce D."/>
            <person name="Goodwin L."/>
            <person name="Chain P."/>
            <person name="Pitluck S."/>
            <person name="Pati A."/>
            <person name="Ivanova N."/>
            <person name="Mavromatis K."/>
            <person name="Chen A."/>
            <person name="Palaniappan K."/>
            <person name="Land M."/>
            <person name="Hauser L."/>
            <person name="Chang Y.J."/>
            <person name="Jeffries C.D."/>
            <person name="Brettin T."/>
            <person name="Rohde M."/>
            <person name="Goker M."/>
            <person name="Bristow J."/>
            <person name="Eisen J.A."/>
            <person name="Markowitz V."/>
            <person name="Hugenholtz P."/>
            <person name="Klenk H.P."/>
            <person name="Kyrpides N.C."/>
        </authorList>
    </citation>
    <scope>NUCLEOTIDE SEQUENCE [LARGE SCALE GENOMIC DNA]</scope>
    <source>
        <strain>ATCC 51198 / DSM 5511 / JCM 9101 / NCIMB 13204 / VKM B-1734 / 4k</strain>
    </source>
</reference>
<accession>D2RUI0</accession>
<name>PSB2_HALTV</name>
<feature type="propeptide" id="PRO_0000397312" description="Removed in mature form; by autocatalysis" evidence="1">
    <location>
        <begin position="1"/>
        <end position="42"/>
    </location>
</feature>
<feature type="chain" id="PRO_0000397313" description="Proteasome subunit beta 2">
    <location>
        <begin position="43"/>
        <end position="237"/>
    </location>
</feature>
<feature type="region of interest" description="Disordered" evidence="2">
    <location>
        <begin position="1"/>
        <end position="45"/>
    </location>
</feature>
<feature type="compositionally biased region" description="Polar residues" evidence="2">
    <location>
        <begin position="1"/>
        <end position="14"/>
    </location>
</feature>
<feature type="active site" description="Nucleophile" evidence="1">
    <location>
        <position position="43"/>
    </location>
</feature>
<gene>
    <name evidence="1" type="primary">psmB2</name>
    <name type="ordered locus">Htur_2272</name>
</gene>
<sequence length="237" mass="24630">MNNWSQGSTPQGSDPSPYAPELGSLPDGSQSDDHGDTVNKTGTTTIGITTDEGVVIATDMRASLGGRFVSNKNVQKVEQIHPTGALTLVGSVGGAQSFIRTLRAEVNLYESRRGEPMPIEALATLAGNFARGGPFRAINPILGGVDEEGSHVYSIDPAGGVMADDYTVTGSGMQLAYGLLEQEYEEGLSLEEAQSVAARAIESAVERDTGSGNGVFLAAVTGEGVDIQGHNDFDAVI</sequence>
<comment type="function">
    <text evidence="1">Component of the proteasome core, a large protease complex with broad specificity involved in protein degradation.</text>
</comment>
<comment type="catalytic activity">
    <reaction evidence="1">
        <text>Cleavage of peptide bonds with very broad specificity.</text>
        <dbReference type="EC" id="3.4.25.1"/>
    </reaction>
</comment>
<comment type="activity regulation">
    <text evidence="1">The formation of the proteasomal ATPase PAN-20S proteasome complex, via the docking of the C-termini of PAN into the intersubunit pockets in the alpha-rings, triggers opening of the gate for substrate entry. Interconversion between the open-gate and close-gate conformations leads to a dynamic regulation of the 20S proteasome proteolysis activity.</text>
</comment>
<comment type="subunit">
    <text evidence="1">The 20S proteasome core is composed of 14 alpha and 14 beta subunits that assemble into four stacked heptameric rings, resulting in a barrel-shaped structure. The two inner rings, each composed of seven catalytic beta subunits, are sandwiched by two outer rings, each composed of seven alpha subunits. The catalytic chamber with the active sites is on the inside of the barrel. Has a gated structure, the ends of the cylinder being occluded by the N-termini of the alpha-subunits. Is capped at one or both ends by the proteasome regulatory ATPase, PAN.</text>
</comment>
<comment type="subcellular location">
    <subcellularLocation>
        <location evidence="1">Cytoplasm</location>
    </subcellularLocation>
</comment>
<comment type="similarity">
    <text evidence="1">Belongs to the peptidase T1B family.</text>
</comment>